<protein>
    <recommendedName>
        <fullName evidence="1">Leucine--tRNA ligase</fullName>
        <ecNumber evidence="1">6.1.1.4</ecNumber>
    </recommendedName>
    <alternativeName>
        <fullName evidence="1">Leucyl-tRNA synthetase</fullName>
        <shortName evidence="1">LeuRS</shortName>
    </alternativeName>
</protein>
<evidence type="ECO:0000255" key="1">
    <source>
        <dbReference type="HAMAP-Rule" id="MF_00049"/>
    </source>
</evidence>
<evidence type="ECO:0000256" key="2">
    <source>
        <dbReference type="SAM" id="MobiDB-lite"/>
    </source>
</evidence>
<name>SYL_CHRFK</name>
<keyword id="KW-0030">Aminoacyl-tRNA synthetase</keyword>
<keyword id="KW-0067">ATP-binding</keyword>
<keyword id="KW-0963">Cytoplasm</keyword>
<keyword id="KW-0436">Ligase</keyword>
<keyword id="KW-0547">Nucleotide-binding</keyword>
<keyword id="KW-0648">Protein biosynthesis</keyword>
<sequence>MSYHFNKIEEKWQKYWADNQTFKASNDSEKPKYYVLDMFPYPSGAGLHVGHPLGYIASDIYARFKRHKGFNVLHPQGYDSFGLPAEQYAIQTGQHPAVTTENNIARYREQLDKIGFSFDWSREVRTSEPDYYKWTQWIFIQLFESWYDQEAEKSRAITELEEIFTSEGNSRINAASDDDVEKFSADDWNACSEDEKEQILLKYRLTYLAEAEVNWCPQLGTVLANDEIVNGVSERGGYPVVRKKMTQWSMRISAFSERLLQDLNKIDWTESLKESQRNWIGKSVGAHVDFKIENSKFKIGVFTTRPDTIFGVSFMTLAPEHELVEKITTEDRKEEVQAYIEASAKRSERERMADVKTISGAFTGAYAEHPFTKKPVPIWIGDYVLAGYGTGAVMAVPCGDQRDHDFARHFDLLIPNIFENVDVSQEAYAGKEGTVIANSDFLSGLEYKEALNKVILELEKTGQGYGKTNYRLRDAVFSRQRYWGEPFPVYYVNGLPKMIDEKYLPLKLPEVEKYLPTETGEPPLGNATDWAWDSKNNKVVSNKVLKQSRKLSGQHDEPNSNVTPSAVEGSDDNGIYPLELNTMPGWAGSSWYLFRYMGAGNPDRFVSEEAQKYWENVDLYIGGSEHATGHLLYSRFWTKFLYDRGWLTVEEPFKKLINQGMILGTSAFVYRLEGENVFVSKNQINGNNVQPIHADVSLVNSSDELDIEGFKKWRPEFADAKFLTEDGKYIVGREVEKMSKSKYNVVNPDEICQDYGADTLRMYEMFLGPLEQAKPWNTAGITGVHNFLKKLWKLYYDGEEFFVSDEKASADSLKTFHKTIKKVTEDIEEFSFNTSVSTFMICVNELTAQKCNSREILEPLAVLIAPYAPHIAEELWEKLGNSESVTTAKYPEFEEKYLVESMKNYPVSFNGKMRFTMELSLDMSKEEIEKTVMADERTQKQLDGRTPKKVIVVPGKIVNIVG</sequence>
<accession>A0M5T1</accession>
<dbReference type="EC" id="6.1.1.4" evidence="1"/>
<dbReference type="EMBL" id="CU207366">
    <property type="protein sequence ID" value="CAL67976.1"/>
    <property type="molecule type" value="Genomic_DNA"/>
</dbReference>
<dbReference type="RefSeq" id="WP_011710877.1">
    <property type="nucleotide sequence ID" value="NC_008571.1"/>
</dbReference>
<dbReference type="SMR" id="A0M5T1"/>
<dbReference type="STRING" id="411154.GFO_3032"/>
<dbReference type="KEGG" id="gfo:GFO_3032"/>
<dbReference type="eggNOG" id="COG0495">
    <property type="taxonomic scope" value="Bacteria"/>
</dbReference>
<dbReference type="HOGENOM" id="CLU_004427_0_0_10"/>
<dbReference type="OrthoDB" id="9810365at2"/>
<dbReference type="Proteomes" id="UP000000755">
    <property type="component" value="Chromosome"/>
</dbReference>
<dbReference type="GO" id="GO:0005829">
    <property type="term" value="C:cytosol"/>
    <property type="evidence" value="ECO:0007669"/>
    <property type="project" value="TreeGrafter"/>
</dbReference>
<dbReference type="GO" id="GO:0002161">
    <property type="term" value="F:aminoacyl-tRNA deacylase activity"/>
    <property type="evidence" value="ECO:0007669"/>
    <property type="project" value="InterPro"/>
</dbReference>
<dbReference type="GO" id="GO:0005524">
    <property type="term" value="F:ATP binding"/>
    <property type="evidence" value="ECO:0007669"/>
    <property type="project" value="UniProtKB-UniRule"/>
</dbReference>
<dbReference type="GO" id="GO:0004823">
    <property type="term" value="F:leucine-tRNA ligase activity"/>
    <property type="evidence" value="ECO:0007669"/>
    <property type="project" value="UniProtKB-UniRule"/>
</dbReference>
<dbReference type="GO" id="GO:0006429">
    <property type="term" value="P:leucyl-tRNA aminoacylation"/>
    <property type="evidence" value="ECO:0007669"/>
    <property type="project" value="UniProtKB-UniRule"/>
</dbReference>
<dbReference type="CDD" id="cd07958">
    <property type="entry name" value="Anticodon_Ia_Leu_BEm"/>
    <property type="match status" value="1"/>
</dbReference>
<dbReference type="FunFam" id="3.40.50.620:FF:000060">
    <property type="entry name" value="Leucine--tRNA ligase"/>
    <property type="match status" value="1"/>
</dbReference>
<dbReference type="FunFam" id="1.10.730.10:FF:000011">
    <property type="entry name" value="Leucine--tRNA ligase chloroplastic/mitochondrial"/>
    <property type="match status" value="1"/>
</dbReference>
<dbReference type="Gene3D" id="3.40.50.620">
    <property type="entry name" value="HUPs"/>
    <property type="match status" value="3"/>
</dbReference>
<dbReference type="Gene3D" id="1.10.730.10">
    <property type="entry name" value="Isoleucyl-tRNA Synthetase, Domain 1"/>
    <property type="match status" value="1"/>
</dbReference>
<dbReference type="Gene3D" id="3.90.740.10">
    <property type="entry name" value="Valyl/Leucyl/Isoleucyl-tRNA synthetase, editing domain"/>
    <property type="match status" value="1"/>
</dbReference>
<dbReference type="HAMAP" id="MF_00049_B">
    <property type="entry name" value="Leu_tRNA_synth_B"/>
    <property type="match status" value="1"/>
</dbReference>
<dbReference type="InterPro" id="IPR001412">
    <property type="entry name" value="aa-tRNA-synth_I_CS"/>
</dbReference>
<dbReference type="InterPro" id="IPR002302">
    <property type="entry name" value="Leu-tRNA-ligase"/>
</dbReference>
<dbReference type="InterPro" id="IPR025709">
    <property type="entry name" value="Leu_tRNA-synth_edit"/>
</dbReference>
<dbReference type="InterPro" id="IPR013155">
    <property type="entry name" value="M/V/L/I-tRNA-synth_anticd-bd"/>
</dbReference>
<dbReference type="InterPro" id="IPR015413">
    <property type="entry name" value="Methionyl/Leucyl_tRNA_Synth"/>
</dbReference>
<dbReference type="InterPro" id="IPR014729">
    <property type="entry name" value="Rossmann-like_a/b/a_fold"/>
</dbReference>
<dbReference type="InterPro" id="IPR009080">
    <property type="entry name" value="tRNAsynth_Ia_anticodon-bd"/>
</dbReference>
<dbReference type="InterPro" id="IPR009008">
    <property type="entry name" value="Val/Leu/Ile-tRNA-synth_edit"/>
</dbReference>
<dbReference type="PANTHER" id="PTHR43740:SF2">
    <property type="entry name" value="LEUCINE--TRNA LIGASE, MITOCHONDRIAL"/>
    <property type="match status" value="1"/>
</dbReference>
<dbReference type="PANTHER" id="PTHR43740">
    <property type="entry name" value="LEUCYL-TRNA SYNTHETASE"/>
    <property type="match status" value="1"/>
</dbReference>
<dbReference type="Pfam" id="PF08264">
    <property type="entry name" value="Anticodon_1"/>
    <property type="match status" value="1"/>
</dbReference>
<dbReference type="Pfam" id="PF13603">
    <property type="entry name" value="tRNA-synt_1_2"/>
    <property type="match status" value="1"/>
</dbReference>
<dbReference type="Pfam" id="PF09334">
    <property type="entry name" value="tRNA-synt_1g"/>
    <property type="match status" value="1"/>
</dbReference>
<dbReference type="PRINTS" id="PR00985">
    <property type="entry name" value="TRNASYNTHLEU"/>
</dbReference>
<dbReference type="SUPFAM" id="SSF47323">
    <property type="entry name" value="Anticodon-binding domain of a subclass of class I aminoacyl-tRNA synthetases"/>
    <property type="match status" value="1"/>
</dbReference>
<dbReference type="SUPFAM" id="SSF52374">
    <property type="entry name" value="Nucleotidylyl transferase"/>
    <property type="match status" value="1"/>
</dbReference>
<dbReference type="SUPFAM" id="SSF50677">
    <property type="entry name" value="ValRS/IleRS/LeuRS editing domain"/>
    <property type="match status" value="1"/>
</dbReference>
<dbReference type="PROSITE" id="PS00178">
    <property type="entry name" value="AA_TRNA_LIGASE_I"/>
    <property type="match status" value="1"/>
</dbReference>
<organism>
    <name type="scientific">Christiangramia forsetii (strain DSM 17595 / CGMCC 1.15422 / KT0803)</name>
    <name type="common">Gramella forsetii</name>
    <dbReference type="NCBI Taxonomy" id="411154"/>
    <lineage>
        <taxon>Bacteria</taxon>
        <taxon>Pseudomonadati</taxon>
        <taxon>Bacteroidota</taxon>
        <taxon>Flavobacteriia</taxon>
        <taxon>Flavobacteriales</taxon>
        <taxon>Flavobacteriaceae</taxon>
        <taxon>Christiangramia</taxon>
    </lineage>
</organism>
<gene>
    <name evidence="1" type="primary">leuS</name>
    <name type="ordered locus">GFO_3032</name>
</gene>
<comment type="catalytic activity">
    <reaction evidence="1">
        <text>tRNA(Leu) + L-leucine + ATP = L-leucyl-tRNA(Leu) + AMP + diphosphate</text>
        <dbReference type="Rhea" id="RHEA:11688"/>
        <dbReference type="Rhea" id="RHEA-COMP:9613"/>
        <dbReference type="Rhea" id="RHEA-COMP:9622"/>
        <dbReference type="ChEBI" id="CHEBI:30616"/>
        <dbReference type="ChEBI" id="CHEBI:33019"/>
        <dbReference type="ChEBI" id="CHEBI:57427"/>
        <dbReference type="ChEBI" id="CHEBI:78442"/>
        <dbReference type="ChEBI" id="CHEBI:78494"/>
        <dbReference type="ChEBI" id="CHEBI:456215"/>
        <dbReference type="EC" id="6.1.1.4"/>
    </reaction>
</comment>
<comment type="subcellular location">
    <subcellularLocation>
        <location evidence="1">Cytoplasm</location>
    </subcellularLocation>
</comment>
<comment type="similarity">
    <text evidence="1">Belongs to the class-I aminoacyl-tRNA synthetase family.</text>
</comment>
<proteinExistence type="inferred from homology"/>
<feature type="chain" id="PRO_1000009347" description="Leucine--tRNA ligase">
    <location>
        <begin position="1"/>
        <end position="962"/>
    </location>
</feature>
<feature type="region of interest" description="Disordered" evidence="2">
    <location>
        <begin position="548"/>
        <end position="570"/>
    </location>
</feature>
<feature type="short sequence motif" description="'HIGH' region">
    <location>
        <begin position="40"/>
        <end position="51"/>
    </location>
</feature>
<feature type="short sequence motif" description="'KMSKS' region">
    <location>
        <begin position="737"/>
        <end position="741"/>
    </location>
</feature>
<feature type="binding site" evidence="1">
    <location>
        <position position="740"/>
    </location>
    <ligand>
        <name>ATP</name>
        <dbReference type="ChEBI" id="CHEBI:30616"/>
    </ligand>
</feature>
<reference key="1">
    <citation type="journal article" date="2006" name="Environ. Microbiol.">
        <title>Whole genome analysis of the marine Bacteroidetes'Gramella forsetii' reveals adaptations to degradation of polymeric organic matter.</title>
        <authorList>
            <person name="Bauer M."/>
            <person name="Kube M."/>
            <person name="Teeling H."/>
            <person name="Richter M."/>
            <person name="Lombardot T."/>
            <person name="Allers E."/>
            <person name="Wuerdemann C.A."/>
            <person name="Quast C."/>
            <person name="Kuhl H."/>
            <person name="Knaust F."/>
            <person name="Woebken D."/>
            <person name="Bischof K."/>
            <person name="Mussmann M."/>
            <person name="Choudhuri J.V."/>
            <person name="Meyer F."/>
            <person name="Reinhardt R."/>
            <person name="Amann R.I."/>
            <person name="Gloeckner F.O."/>
        </authorList>
    </citation>
    <scope>NUCLEOTIDE SEQUENCE [LARGE SCALE GENOMIC DNA]</scope>
    <source>
        <strain>DSM 17595 / CGMCC 1.15422 / KT0803</strain>
    </source>
</reference>